<keyword id="KW-0028">Amino-acid biosynthesis</keyword>
<keyword id="KW-0963">Cytoplasm</keyword>
<keyword id="KW-0368">Histidine biosynthesis</keyword>
<sequence>MNNSEQLIALKESETAFLKYFNKADYELVDFSVVEKLDWKQLNHEDLQQMGERNFWQHEHQIYALRNDFTDQLLRYYSMYPTAATKVAYTGLIIRNNEAAVQVGLENYAPSLANVQQSLKLFIQFIQQQLRDNVHFVVLGHYQLLDALLDKSLQTPDILSMIEERNLSGLVTYLSTEHPIVQILKENTQQQLNVLEHYIPNDHPALVELKIWERWLHTQGYKDIHLDITAQPPRSYYTGLFIQCHFAENESRVLTGGYYKGSIEGFGLGLTL</sequence>
<organism>
    <name type="scientific">Staphylococcus aureus (strain MSSA476)</name>
    <dbReference type="NCBI Taxonomy" id="282459"/>
    <lineage>
        <taxon>Bacteria</taxon>
        <taxon>Bacillati</taxon>
        <taxon>Bacillota</taxon>
        <taxon>Bacilli</taxon>
        <taxon>Bacillales</taxon>
        <taxon>Staphylococcaceae</taxon>
        <taxon>Staphylococcus</taxon>
    </lineage>
</organism>
<accession>Q6G5Z5</accession>
<evidence type="ECO:0000255" key="1">
    <source>
        <dbReference type="HAMAP-Rule" id="MF_00125"/>
    </source>
</evidence>
<feature type="chain" id="PRO_0000171063" description="ATP phosphoribosyltransferase regulatory subunit">
    <location>
        <begin position="1"/>
        <end position="272"/>
    </location>
</feature>
<proteinExistence type="inferred from homology"/>
<comment type="function">
    <text evidence="1">Required for the first step of histidine biosynthesis. May allow the feedback regulation of ATP phosphoribosyltransferase activity by histidine.</text>
</comment>
<comment type="pathway">
    <text evidence="1">Amino-acid biosynthesis; L-histidine biosynthesis; L-histidine from 5-phospho-alpha-D-ribose 1-diphosphate: step 1/9.</text>
</comment>
<comment type="subunit">
    <text evidence="1">Heteromultimer composed of HisG and HisZ subunits.</text>
</comment>
<comment type="subcellular location">
    <subcellularLocation>
        <location evidence="1">Cytoplasm</location>
    </subcellularLocation>
</comment>
<comment type="miscellaneous">
    <text>This function is generally fulfilled by the C-terminal part of HisG, which is missing in some bacteria such as this one.</text>
</comment>
<comment type="similarity">
    <text evidence="1">Belongs to the class-II aminoacyl-tRNA synthetase family. HisZ subfamily.</text>
</comment>
<dbReference type="EMBL" id="BX571857">
    <property type="protein sequence ID" value="CAG44382.1"/>
    <property type="molecule type" value="Genomic_DNA"/>
</dbReference>
<dbReference type="RefSeq" id="WP_001065591.1">
    <property type="nucleotide sequence ID" value="NC_002953.3"/>
</dbReference>
<dbReference type="SMR" id="Q6G5Z5"/>
<dbReference type="KEGG" id="sas:SAS2565"/>
<dbReference type="HOGENOM" id="CLU_089652_0_0_9"/>
<dbReference type="UniPathway" id="UPA00031">
    <property type="reaction ID" value="UER00006"/>
</dbReference>
<dbReference type="GO" id="GO:0005737">
    <property type="term" value="C:cytoplasm"/>
    <property type="evidence" value="ECO:0007669"/>
    <property type="project" value="UniProtKB-SubCell"/>
</dbReference>
<dbReference type="GO" id="GO:0140096">
    <property type="term" value="F:catalytic activity, acting on a protein"/>
    <property type="evidence" value="ECO:0007669"/>
    <property type="project" value="UniProtKB-ARBA"/>
</dbReference>
<dbReference type="GO" id="GO:0016740">
    <property type="term" value="F:transferase activity"/>
    <property type="evidence" value="ECO:0007669"/>
    <property type="project" value="UniProtKB-ARBA"/>
</dbReference>
<dbReference type="GO" id="GO:0000105">
    <property type="term" value="P:L-histidine biosynthetic process"/>
    <property type="evidence" value="ECO:0007669"/>
    <property type="project" value="UniProtKB-UniRule"/>
</dbReference>
<dbReference type="Gene3D" id="3.30.930.10">
    <property type="entry name" value="Bira Bifunctional Protein, Domain 2"/>
    <property type="match status" value="1"/>
</dbReference>
<dbReference type="HAMAP" id="MF_00125">
    <property type="entry name" value="HisZ"/>
    <property type="match status" value="1"/>
</dbReference>
<dbReference type="InterPro" id="IPR045864">
    <property type="entry name" value="aa-tRNA-synth_II/BPL/LPL"/>
</dbReference>
<dbReference type="InterPro" id="IPR041715">
    <property type="entry name" value="HisRS-like_core"/>
</dbReference>
<dbReference type="InterPro" id="IPR004517">
    <property type="entry name" value="HisZ"/>
</dbReference>
<dbReference type="NCBIfam" id="NF008947">
    <property type="entry name" value="PRK12294.1"/>
    <property type="match status" value="1"/>
</dbReference>
<dbReference type="Pfam" id="PF13393">
    <property type="entry name" value="tRNA-synt_His"/>
    <property type="match status" value="1"/>
</dbReference>
<dbReference type="SUPFAM" id="SSF55681">
    <property type="entry name" value="Class II aaRS and biotin synthetases"/>
    <property type="match status" value="1"/>
</dbReference>
<protein>
    <recommendedName>
        <fullName evidence="1">ATP phosphoribosyltransferase regulatory subunit</fullName>
    </recommendedName>
</protein>
<name>HISZ_STAAS</name>
<reference key="1">
    <citation type="journal article" date="2004" name="Proc. Natl. Acad. Sci. U.S.A.">
        <title>Complete genomes of two clinical Staphylococcus aureus strains: evidence for the rapid evolution of virulence and drug resistance.</title>
        <authorList>
            <person name="Holden M.T.G."/>
            <person name="Feil E.J."/>
            <person name="Lindsay J.A."/>
            <person name="Peacock S.J."/>
            <person name="Day N.P.J."/>
            <person name="Enright M.C."/>
            <person name="Foster T.J."/>
            <person name="Moore C.E."/>
            <person name="Hurst L."/>
            <person name="Atkin R."/>
            <person name="Barron A."/>
            <person name="Bason N."/>
            <person name="Bentley S.D."/>
            <person name="Chillingworth C."/>
            <person name="Chillingworth T."/>
            <person name="Churcher C."/>
            <person name="Clark L."/>
            <person name="Corton C."/>
            <person name="Cronin A."/>
            <person name="Doggett J."/>
            <person name="Dowd L."/>
            <person name="Feltwell T."/>
            <person name="Hance Z."/>
            <person name="Harris B."/>
            <person name="Hauser H."/>
            <person name="Holroyd S."/>
            <person name="Jagels K."/>
            <person name="James K.D."/>
            <person name="Lennard N."/>
            <person name="Line A."/>
            <person name="Mayes R."/>
            <person name="Moule S."/>
            <person name="Mungall K."/>
            <person name="Ormond D."/>
            <person name="Quail M.A."/>
            <person name="Rabbinowitsch E."/>
            <person name="Rutherford K.M."/>
            <person name="Sanders M."/>
            <person name="Sharp S."/>
            <person name="Simmonds M."/>
            <person name="Stevens K."/>
            <person name="Whitehead S."/>
            <person name="Barrell B.G."/>
            <person name="Spratt B.G."/>
            <person name="Parkhill J."/>
        </authorList>
    </citation>
    <scope>NUCLEOTIDE SEQUENCE [LARGE SCALE GENOMIC DNA]</scope>
    <source>
        <strain>MSSA476</strain>
    </source>
</reference>
<gene>
    <name evidence="1" type="primary">hisZ</name>
    <name type="ordered locus">SAS2565</name>
</gene>